<accession>Q80DU8</accession>
<keyword id="KW-1015">Disulfide bond</keyword>
<keyword id="KW-1168">Fusion of virus membrane with host membrane</keyword>
<keyword id="KW-0426">Late protein</keyword>
<keyword id="KW-0472">Membrane</keyword>
<keyword id="KW-0597">Phosphoprotein</keyword>
<keyword id="KW-0735">Signal-anchor</keyword>
<keyword id="KW-0812">Transmembrane</keyword>
<keyword id="KW-1133">Transmembrane helix</keyword>
<keyword id="KW-0261">Viral envelope protein</keyword>
<keyword id="KW-1162">Viral penetration into host cytoplasm</keyword>
<keyword id="KW-0946">Virion</keyword>
<keyword id="KW-1160">Virus entry into host cell</keyword>
<comment type="function">
    <text evidence="1">Envelope protein required for virus entry into host cell and for cell-cell fusion (syncytium formation).</text>
</comment>
<comment type="subunit">
    <text evidence="1">Part of a stable entry-fusion complex (EFC) which is at least composed of proteins OPG143, OPG147, OPG155, OPG086, OPG094, OPG107, OPG104, and OPG099. Formation of the viral membrane is necessary for the assembly of the complex. Interacts directly with protein OPG107.</text>
</comment>
<comment type="subcellular location">
    <subcellularLocation>
        <location evidence="1">Virion membrane</location>
        <topology evidence="1">Single-pass type III membrane protein</topology>
    </subcellularLocation>
    <text evidence="1">Component of the mature virion (MV) membrane.</text>
</comment>
<comment type="PTM">
    <text evidence="1">Contains two intramolecular disulfide bonds. They are created by the viral disulfide bond formation pathway, a poxvirus-specific pathway that operates on the cytoplasmic side of the MV membranes.</text>
</comment>
<comment type="similarity">
    <text evidence="3">Belongs to the orthopoxvirus OPG155 protein family.</text>
</comment>
<proteinExistence type="inferred from homology"/>
<organism>
    <name type="scientific">Cowpox virus (strain GRI-90 / Grishak)</name>
    <name type="common">CPV</name>
    <dbReference type="NCBI Taxonomy" id="265871"/>
    <lineage>
        <taxon>Viruses</taxon>
        <taxon>Varidnaviria</taxon>
        <taxon>Bamfordvirae</taxon>
        <taxon>Nucleocytoviricota</taxon>
        <taxon>Pokkesviricetes</taxon>
        <taxon>Chitovirales</taxon>
        <taxon>Poxviridae</taxon>
        <taxon>Chordopoxvirinae</taxon>
        <taxon>Orthopoxvirus</taxon>
        <taxon>Cowpox virus</taxon>
    </lineage>
</organism>
<organismHost>
    <name type="scientific">Bos taurus</name>
    <name type="common">Bovine</name>
    <dbReference type="NCBI Taxonomy" id="9913"/>
</organismHost>
<organismHost>
    <name type="scientific">Felis catus</name>
    <name type="common">Cat</name>
    <name type="synonym">Felis silvestris catus</name>
    <dbReference type="NCBI Taxonomy" id="9685"/>
</organismHost>
<organismHost>
    <name type="scientific">Homo sapiens</name>
    <name type="common">Human</name>
    <dbReference type="NCBI Taxonomy" id="9606"/>
</organismHost>
<organismHost>
    <name type="scientific">Loxodonta africana</name>
    <name type="common">African elephant</name>
    <dbReference type="NCBI Taxonomy" id="9785"/>
</organismHost>
<organismHost>
    <name type="scientific">Microtus agrestis</name>
    <name type="common">Short-tailed field vole</name>
    <dbReference type="NCBI Taxonomy" id="29092"/>
</organismHost>
<organismHost>
    <name type="scientific">Mus musculus</name>
    <name type="common">Mouse</name>
    <dbReference type="NCBI Taxonomy" id="10090"/>
</organismHost>
<organismHost>
    <name type="scientific">Myodes glareolus</name>
    <name type="common">Bank vole</name>
    <name type="synonym">Clethrionomys glareolus</name>
    <dbReference type="NCBI Taxonomy" id="447135"/>
</organismHost>
<gene>
    <name type="primary">OPG155</name>
    <name type="ORF">A29L</name>
</gene>
<protein>
    <recommendedName>
        <fullName>Envelope protein OPG155</fullName>
    </recommendedName>
    <alternativeName>
        <fullName>Protein A29</fullName>
    </alternativeName>
</protein>
<reference key="1">
    <citation type="journal article" date="2000" name="Mol. Biol. (Mosk.)">
        <title>Structural-functional organization of Cowpox virus GRI-90 genome. I. Isolation of clones of DNA fragments of complete Cowpox virus genome.</title>
        <authorList>
            <person name="Riazankina O.I."/>
            <person name="Tumanova O.I.U."/>
            <person name="Kolosova I.V."/>
            <person name="Safronov P.F."/>
            <person name="Kablova G.V."/>
            <person name="Riazankin I.A."/>
            <person name="Shchelkunov S.N."/>
        </authorList>
    </citation>
    <scope>NUCLEOTIDE SEQUENCE [GENOMIC DNA]</scope>
</reference>
<name>PG155_CWPXG</name>
<evidence type="ECO:0000250" key="1">
    <source>
        <dbReference type="UniProtKB" id="P68633"/>
    </source>
</evidence>
<evidence type="ECO:0000255" key="2"/>
<evidence type="ECO:0000305" key="3"/>
<dbReference type="EMBL" id="X94355">
    <property type="protein sequence ID" value="CAD90696.1"/>
    <property type="molecule type" value="Genomic_DNA"/>
</dbReference>
<dbReference type="SMR" id="Q80DU8"/>
<dbReference type="Proteomes" id="UP000137384">
    <property type="component" value="Segment"/>
</dbReference>
<dbReference type="GO" id="GO:0016020">
    <property type="term" value="C:membrane"/>
    <property type="evidence" value="ECO:0007669"/>
    <property type="project" value="UniProtKB-KW"/>
</dbReference>
<dbReference type="GO" id="GO:0019031">
    <property type="term" value="C:viral envelope"/>
    <property type="evidence" value="ECO:0007669"/>
    <property type="project" value="UniProtKB-KW"/>
</dbReference>
<dbReference type="GO" id="GO:0055036">
    <property type="term" value="C:virion membrane"/>
    <property type="evidence" value="ECO:0007669"/>
    <property type="project" value="UniProtKB-SubCell"/>
</dbReference>
<dbReference type="GO" id="GO:0039663">
    <property type="term" value="P:membrane fusion involved in viral entry into host cell"/>
    <property type="evidence" value="ECO:0007669"/>
    <property type="project" value="UniProtKB-KW"/>
</dbReference>
<dbReference type="GO" id="GO:0046718">
    <property type="term" value="P:symbiont entry into host cell"/>
    <property type="evidence" value="ECO:0007669"/>
    <property type="project" value="UniProtKB-KW"/>
</dbReference>
<dbReference type="InterPro" id="IPR007664">
    <property type="entry name" value="Poxvirus_A28"/>
</dbReference>
<dbReference type="Pfam" id="PF04584">
    <property type="entry name" value="Pox_A28"/>
    <property type="match status" value="1"/>
</dbReference>
<sequence>MNSLSIFFIVVATAAVCLLFIQGYSIYENYGNIKEFNATHAAFEYSKSIGGTPALDRRVQDVNDTISDVKQKWRCVVYPGNGFVSASIFGFQAEVGPNNTRSIRKFNTMQQCIDFTFSDVINIDIYNPCVAPNINNAECQFLKSVL</sequence>
<feature type="chain" id="PRO_0000099289" description="Envelope protein OPG155">
    <location>
        <begin position="1"/>
        <end position="146"/>
    </location>
</feature>
<feature type="transmembrane region" description="Helical; Signal-anchor for type II membrane protein" evidence="2">
    <location>
        <begin position="1"/>
        <end position="21"/>
    </location>
</feature>
<feature type="topological domain" description="Virion surface" evidence="2">
    <location>
        <begin position="22"/>
        <end position="146"/>
    </location>
</feature>